<sequence length="99" mass="10773">MMNMQSMMKQAQKLQKQMEKGQAELAATEFTGKSAQDLVVAKLTGDKKVVSIDFNPAVVDPEDLETLSEMTAQALNHALAQIDDATQKKMGAFAGKLPF</sequence>
<gene>
    <name type="ordered locus">SSA_0326</name>
</gene>
<proteinExistence type="inferred from homology"/>
<dbReference type="EMBL" id="CP000387">
    <property type="protein sequence ID" value="ABN43783.1"/>
    <property type="molecule type" value="Genomic_DNA"/>
</dbReference>
<dbReference type="RefSeq" id="WP_002919734.1">
    <property type="nucleotide sequence ID" value="NC_009009.1"/>
</dbReference>
<dbReference type="RefSeq" id="YP_001034333.1">
    <property type="nucleotide sequence ID" value="NC_009009.1"/>
</dbReference>
<dbReference type="SMR" id="A3CKS8"/>
<dbReference type="STRING" id="388919.SSA_0326"/>
<dbReference type="KEGG" id="ssa:SSA_0326"/>
<dbReference type="PATRIC" id="fig|388919.9.peg.316"/>
<dbReference type="eggNOG" id="COG0718">
    <property type="taxonomic scope" value="Bacteria"/>
</dbReference>
<dbReference type="HOGENOM" id="CLU_140930_1_1_9"/>
<dbReference type="OrthoDB" id="9795263at2"/>
<dbReference type="Proteomes" id="UP000002148">
    <property type="component" value="Chromosome"/>
</dbReference>
<dbReference type="GO" id="GO:0043590">
    <property type="term" value="C:bacterial nucleoid"/>
    <property type="evidence" value="ECO:0007669"/>
    <property type="project" value="UniProtKB-UniRule"/>
</dbReference>
<dbReference type="GO" id="GO:0005829">
    <property type="term" value="C:cytosol"/>
    <property type="evidence" value="ECO:0007669"/>
    <property type="project" value="TreeGrafter"/>
</dbReference>
<dbReference type="GO" id="GO:0003677">
    <property type="term" value="F:DNA binding"/>
    <property type="evidence" value="ECO:0007669"/>
    <property type="project" value="UniProtKB-UniRule"/>
</dbReference>
<dbReference type="Gene3D" id="3.30.1310.10">
    <property type="entry name" value="Nucleoid-associated protein YbaB-like domain"/>
    <property type="match status" value="1"/>
</dbReference>
<dbReference type="HAMAP" id="MF_00274">
    <property type="entry name" value="DNA_YbaB_EbfC"/>
    <property type="match status" value="1"/>
</dbReference>
<dbReference type="InterPro" id="IPR036894">
    <property type="entry name" value="YbaB-like_sf"/>
</dbReference>
<dbReference type="InterPro" id="IPR004401">
    <property type="entry name" value="YbaB/EbfC"/>
</dbReference>
<dbReference type="NCBIfam" id="TIGR00103">
    <property type="entry name" value="DNA_YbaB_EbfC"/>
    <property type="match status" value="1"/>
</dbReference>
<dbReference type="PANTHER" id="PTHR33449">
    <property type="entry name" value="NUCLEOID-ASSOCIATED PROTEIN YBAB"/>
    <property type="match status" value="1"/>
</dbReference>
<dbReference type="PANTHER" id="PTHR33449:SF1">
    <property type="entry name" value="NUCLEOID-ASSOCIATED PROTEIN YBAB"/>
    <property type="match status" value="1"/>
</dbReference>
<dbReference type="Pfam" id="PF02575">
    <property type="entry name" value="YbaB_DNA_bd"/>
    <property type="match status" value="1"/>
</dbReference>
<dbReference type="PIRSF" id="PIRSF004555">
    <property type="entry name" value="UCP004555"/>
    <property type="match status" value="1"/>
</dbReference>
<dbReference type="SUPFAM" id="SSF82607">
    <property type="entry name" value="YbaB-like"/>
    <property type="match status" value="1"/>
</dbReference>
<organism>
    <name type="scientific">Streptococcus sanguinis (strain SK36)</name>
    <dbReference type="NCBI Taxonomy" id="388919"/>
    <lineage>
        <taxon>Bacteria</taxon>
        <taxon>Bacillati</taxon>
        <taxon>Bacillota</taxon>
        <taxon>Bacilli</taxon>
        <taxon>Lactobacillales</taxon>
        <taxon>Streptococcaceae</taxon>
        <taxon>Streptococcus</taxon>
    </lineage>
</organism>
<protein>
    <recommendedName>
        <fullName evidence="1">Nucleoid-associated protein SSA_0326</fullName>
    </recommendedName>
</protein>
<keyword id="KW-0963">Cytoplasm</keyword>
<keyword id="KW-0238">DNA-binding</keyword>
<keyword id="KW-1185">Reference proteome</keyword>
<feature type="chain" id="PRO_1000003845" description="Nucleoid-associated protein SSA_0326">
    <location>
        <begin position="1"/>
        <end position="99"/>
    </location>
</feature>
<feature type="region of interest" description="Disordered" evidence="2">
    <location>
        <begin position="1"/>
        <end position="23"/>
    </location>
</feature>
<feature type="compositionally biased region" description="Low complexity" evidence="2">
    <location>
        <begin position="1"/>
        <end position="15"/>
    </location>
</feature>
<evidence type="ECO:0000255" key="1">
    <source>
        <dbReference type="HAMAP-Rule" id="MF_00274"/>
    </source>
</evidence>
<evidence type="ECO:0000256" key="2">
    <source>
        <dbReference type="SAM" id="MobiDB-lite"/>
    </source>
</evidence>
<name>Y326_STRSV</name>
<reference key="1">
    <citation type="journal article" date="2007" name="J. Bacteriol.">
        <title>Genome of the opportunistic pathogen Streptococcus sanguinis.</title>
        <authorList>
            <person name="Xu P."/>
            <person name="Alves J.M."/>
            <person name="Kitten T."/>
            <person name="Brown A."/>
            <person name="Chen Z."/>
            <person name="Ozaki L.S."/>
            <person name="Manque P."/>
            <person name="Ge X."/>
            <person name="Serrano M.G."/>
            <person name="Puiu D."/>
            <person name="Hendricks S."/>
            <person name="Wang Y."/>
            <person name="Chaplin M.D."/>
            <person name="Akan D."/>
            <person name="Paik S."/>
            <person name="Peterson D.L."/>
            <person name="Macrina F.L."/>
            <person name="Buck G.A."/>
        </authorList>
    </citation>
    <scope>NUCLEOTIDE SEQUENCE [LARGE SCALE GENOMIC DNA]</scope>
    <source>
        <strain>SK36</strain>
    </source>
</reference>
<comment type="function">
    <text evidence="1">Binds to DNA and alters its conformation. May be involved in regulation of gene expression, nucleoid organization and DNA protection.</text>
</comment>
<comment type="subunit">
    <text evidence="1">Homodimer.</text>
</comment>
<comment type="subcellular location">
    <subcellularLocation>
        <location evidence="1">Cytoplasm</location>
        <location evidence="1">Nucleoid</location>
    </subcellularLocation>
</comment>
<comment type="similarity">
    <text evidence="1">Belongs to the YbaB/EbfC family.</text>
</comment>
<accession>A3CKS8</accession>